<geneLocation type="mitochondrion"/>
<reference key="1">
    <citation type="journal article" date="2006" name="Mol. Phylogenet. Evol.">
        <title>Molecular systematics of Vampyressine bats (Phyllostomidae: Stenodermatinae) with comparison of direct and indirect surveys of mitochondrial DNA variation.</title>
        <authorList>
            <person name="Hoofer S.R."/>
            <person name="Baker R.J."/>
        </authorList>
    </citation>
    <scope>NUCLEOTIDE SEQUENCE [GENOMIC DNA]</scope>
</reference>
<proteinExistence type="inferred from homology"/>
<protein>
    <recommendedName>
        <fullName>Cytochrome b</fullName>
    </recommendedName>
    <alternativeName>
        <fullName>Complex III subunit 3</fullName>
    </alternativeName>
    <alternativeName>
        <fullName>Complex III subunit III</fullName>
    </alternativeName>
    <alternativeName>
        <fullName>Cytochrome b-c1 complex subunit 3</fullName>
    </alternativeName>
    <alternativeName>
        <fullName>Ubiquinol-cytochrome-c reductase complex cytochrome b subunit</fullName>
    </alternativeName>
</protein>
<accession>Q1HUV6</accession>
<comment type="function">
    <text evidence="2">Component of the ubiquinol-cytochrome c reductase complex (complex III or cytochrome b-c1 complex) that is part of the mitochondrial respiratory chain. The b-c1 complex mediates electron transfer from ubiquinol to cytochrome c. Contributes to the generation of a proton gradient across the mitochondrial membrane that is then used for ATP synthesis.</text>
</comment>
<comment type="cofactor">
    <cofactor evidence="2">
        <name>heme b</name>
        <dbReference type="ChEBI" id="CHEBI:60344"/>
    </cofactor>
    <text evidence="2">Binds 2 heme b groups non-covalently.</text>
</comment>
<comment type="subunit">
    <text evidence="2">The cytochrome bc1 complex contains 11 subunits: 3 respiratory subunits (MT-CYB, CYC1 and UQCRFS1), 2 core proteins (UQCRC1 and UQCRC2) and 6 low-molecular weight proteins (UQCRH/QCR6, UQCRB/QCR7, UQCRQ/QCR8, UQCR10/QCR9, UQCR11/QCR10 and a cleavage product of UQCRFS1). This cytochrome bc1 complex then forms a dimer.</text>
</comment>
<comment type="subcellular location">
    <subcellularLocation>
        <location evidence="2">Mitochondrion inner membrane</location>
        <topology evidence="2">Multi-pass membrane protein</topology>
    </subcellularLocation>
</comment>
<comment type="miscellaneous">
    <text evidence="1">Heme 1 (or BL or b562) is low-potential and absorbs at about 562 nm, and heme 2 (or BH or b566) is high-potential and absorbs at about 566 nm.</text>
</comment>
<comment type="similarity">
    <text evidence="3 4">Belongs to the cytochrome b family.</text>
</comment>
<comment type="caution">
    <text evidence="2">The full-length protein contains only eight transmembrane helices, not nine as predicted by bioinformatics tools.</text>
</comment>
<evidence type="ECO:0000250" key="1"/>
<evidence type="ECO:0000250" key="2">
    <source>
        <dbReference type="UniProtKB" id="P00157"/>
    </source>
</evidence>
<evidence type="ECO:0000255" key="3">
    <source>
        <dbReference type="PROSITE-ProRule" id="PRU00967"/>
    </source>
</evidence>
<evidence type="ECO:0000255" key="4">
    <source>
        <dbReference type="PROSITE-ProRule" id="PRU00968"/>
    </source>
</evidence>
<sequence>MTNIRKTHPLLKIINNSLVDLPAPSSLSSWWNFGSLLGVCLGVQILTGLFLAMHYTSDTATAFNSVTHICRDVNYGWLLRYLHANGASMFFICLYLHVGRGLYYGSYTYSETWNIGILLLFAVMATAFMGYVLPWGQMSFWGATVITNLLSAIPYIGTELVQWIWGGFSVDKATLTRFFAFHFLLPFIVAALVMVHLLFLHETGSNNPTGIPSDPDMIPFHPYYTIKDILGFLVMLTALSALVLFSPDLLGDPDNYIPANPLNTPPHIKPEWYFLFAYAILRSIPNKLGGVLALVLSILILTIVPILHMSKQRSMMFRPLSQCLFWLLVAVLFTLTWIGGQPVEHPYIIIGQTASVLYFLILLVLMPLTSITENHLLKW</sequence>
<feature type="chain" id="PRO_0000257941" description="Cytochrome b">
    <location>
        <begin position="1"/>
        <end position="379"/>
    </location>
</feature>
<feature type="transmembrane region" description="Helical" evidence="2">
    <location>
        <begin position="33"/>
        <end position="53"/>
    </location>
</feature>
<feature type="transmembrane region" description="Helical" evidence="2">
    <location>
        <begin position="77"/>
        <end position="98"/>
    </location>
</feature>
<feature type="transmembrane region" description="Helical" evidence="2">
    <location>
        <begin position="113"/>
        <end position="133"/>
    </location>
</feature>
<feature type="transmembrane region" description="Helical" evidence="2">
    <location>
        <begin position="178"/>
        <end position="198"/>
    </location>
</feature>
<feature type="transmembrane region" description="Helical" evidence="2">
    <location>
        <begin position="226"/>
        <end position="246"/>
    </location>
</feature>
<feature type="transmembrane region" description="Helical" evidence="2">
    <location>
        <begin position="288"/>
        <end position="308"/>
    </location>
</feature>
<feature type="transmembrane region" description="Helical" evidence="2">
    <location>
        <begin position="320"/>
        <end position="340"/>
    </location>
</feature>
<feature type="transmembrane region" description="Helical" evidence="2">
    <location>
        <begin position="347"/>
        <end position="367"/>
    </location>
</feature>
<feature type="binding site" description="axial binding residue" evidence="2">
    <location>
        <position position="83"/>
    </location>
    <ligand>
        <name>heme b</name>
        <dbReference type="ChEBI" id="CHEBI:60344"/>
        <label>b562</label>
    </ligand>
    <ligandPart>
        <name>Fe</name>
        <dbReference type="ChEBI" id="CHEBI:18248"/>
    </ligandPart>
</feature>
<feature type="binding site" description="axial binding residue" evidence="2">
    <location>
        <position position="97"/>
    </location>
    <ligand>
        <name>heme b</name>
        <dbReference type="ChEBI" id="CHEBI:60344"/>
        <label>b566</label>
    </ligand>
    <ligandPart>
        <name>Fe</name>
        <dbReference type="ChEBI" id="CHEBI:18248"/>
    </ligandPart>
</feature>
<feature type="binding site" description="axial binding residue" evidence="2">
    <location>
        <position position="182"/>
    </location>
    <ligand>
        <name>heme b</name>
        <dbReference type="ChEBI" id="CHEBI:60344"/>
        <label>b562</label>
    </ligand>
    <ligandPart>
        <name>Fe</name>
        <dbReference type="ChEBI" id="CHEBI:18248"/>
    </ligandPart>
</feature>
<feature type="binding site" description="axial binding residue" evidence="2">
    <location>
        <position position="196"/>
    </location>
    <ligand>
        <name>heme b</name>
        <dbReference type="ChEBI" id="CHEBI:60344"/>
        <label>b566</label>
    </ligand>
    <ligandPart>
        <name>Fe</name>
        <dbReference type="ChEBI" id="CHEBI:18248"/>
    </ligandPart>
</feature>
<feature type="binding site" evidence="2">
    <location>
        <position position="201"/>
    </location>
    <ligand>
        <name>a ubiquinone</name>
        <dbReference type="ChEBI" id="CHEBI:16389"/>
    </ligand>
</feature>
<name>CYB_STUER</name>
<keyword id="KW-0249">Electron transport</keyword>
<keyword id="KW-0349">Heme</keyword>
<keyword id="KW-0408">Iron</keyword>
<keyword id="KW-0472">Membrane</keyword>
<keyword id="KW-0479">Metal-binding</keyword>
<keyword id="KW-0496">Mitochondrion</keyword>
<keyword id="KW-0999">Mitochondrion inner membrane</keyword>
<keyword id="KW-0679">Respiratory chain</keyword>
<keyword id="KW-0812">Transmembrane</keyword>
<keyword id="KW-1133">Transmembrane helix</keyword>
<keyword id="KW-0813">Transport</keyword>
<keyword id="KW-0830">Ubiquinone</keyword>
<dbReference type="EMBL" id="DQ312399">
    <property type="protein sequence ID" value="ABC61888.1"/>
    <property type="molecule type" value="Genomic_DNA"/>
</dbReference>
<dbReference type="SMR" id="Q1HUV6"/>
<dbReference type="GO" id="GO:0005743">
    <property type="term" value="C:mitochondrial inner membrane"/>
    <property type="evidence" value="ECO:0007669"/>
    <property type="project" value="UniProtKB-SubCell"/>
</dbReference>
<dbReference type="GO" id="GO:0045275">
    <property type="term" value="C:respiratory chain complex III"/>
    <property type="evidence" value="ECO:0007669"/>
    <property type="project" value="InterPro"/>
</dbReference>
<dbReference type="GO" id="GO:0046872">
    <property type="term" value="F:metal ion binding"/>
    <property type="evidence" value="ECO:0007669"/>
    <property type="project" value="UniProtKB-KW"/>
</dbReference>
<dbReference type="GO" id="GO:0008121">
    <property type="term" value="F:ubiquinol-cytochrome-c reductase activity"/>
    <property type="evidence" value="ECO:0007669"/>
    <property type="project" value="InterPro"/>
</dbReference>
<dbReference type="GO" id="GO:0006122">
    <property type="term" value="P:mitochondrial electron transport, ubiquinol to cytochrome c"/>
    <property type="evidence" value="ECO:0007669"/>
    <property type="project" value="TreeGrafter"/>
</dbReference>
<dbReference type="CDD" id="cd00290">
    <property type="entry name" value="cytochrome_b_C"/>
    <property type="match status" value="1"/>
</dbReference>
<dbReference type="CDD" id="cd00284">
    <property type="entry name" value="Cytochrome_b_N"/>
    <property type="match status" value="1"/>
</dbReference>
<dbReference type="FunFam" id="1.20.810.10:FF:000002">
    <property type="entry name" value="Cytochrome b"/>
    <property type="match status" value="1"/>
</dbReference>
<dbReference type="Gene3D" id="1.20.810.10">
    <property type="entry name" value="Cytochrome Bc1 Complex, Chain C"/>
    <property type="match status" value="1"/>
</dbReference>
<dbReference type="InterPro" id="IPR005798">
    <property type="entry name" value="Cyt_b/b6_C"/>
</dbReference>
<dbReference type="InterPro" id="IPR036150">
    <property type="entry name" value="Cyt_b/b6_C_sf"/>
</dbReference>
<dbReference type="InterPro" id="IPR005797">
    <property type="entry name" value="Cyt_b/b6_N"/>
</dbReference>
<dbReference type="InterPro" id="IPR027387">
    <property type="entry name" value="Cytb/b6-like_sf"/>
</dbReference>
<dbReference type="InterPro" id="IPR030689">
    <property type="entry name" value="Cytochrome_b"/>
</dbReference>
<dbReference type="InterPro" id="IPR048260">
    <property type="entry name" value="Cytochrome_b_C_euk/bac"/>
</dbReference>
<dbReference type="InterPro" id="IPR048259">
    <property type="entry name" value="Cytochrome_b_N_euk/bac"/>
</dbReference>
<dbReference type="InterPro" id="IPR016174">
    <property type="entry name" value="Di-haem_cyt_TM"/>
</dbReference>
<dbReference type="PANTHER" id="PTHR19271">
    <property type="entry name" value="CYTOCHROME B"/>
    <property type="match status" value="1"/>
</dbReference>
<dbReference type="PANTHER" id="PTHR19271:SF16">
    <property type="entry name" value="CYTOCHROME B"/>
    <property type="match status" value="1"/>
</dbReference>
<dbReference type="Pfam" id="PF00032">
    <property type="entry name" value="Cytochrom_B_C"/>
    <property type="match status" value="1"/>
</dbReference>
<dbReference type="Pfam" id="PF00033">
    <property type="entry name" value="Cytochrome_B"/>
    <property type="match status" value="1"/>
</dbReference>
<dbReference type="PIRSF" id="PIRSF038885">
    <property type="entry name" value="COB"/>
    <property type="match status" value="1"/>
</dbReference>
<dbReference type="SUPFAM" id="SSF81648">
    <property type="entry name" value="a domain/subunit of cytochrome bc1 complex (Ubiquinol-cytochrome c reductase)"/>
    <property type="match status" value="1"/>
</dbReference>
<dbReference type="SUPFAM" id="SSF81342">
    <property type="entry name" value="Transmembrane di-heme cytochromes"/>
    <property type="match status" value="1"/>
</dbReference>
<dbReference type="PROSITE" id="PS51003">
    <property type="entry name" value="CYTB_CTER"/>
    <property type="match status" value="1"/>
</dbReference>
<dbReference type="PROSITE" id="PS51002">
    <property type="entry name" value="CYTB_NTER"/>
    <property type="match status" value="1"/>
</dbReference>
<gene>
    <name type="primary">MT-CYB</name>
    <name type="synonym">COB</name>
    <name type="synonym">CYTB</name>
    <name type="synonym">MTCYB</name>
</gene>
<organism>
    <name type="scientific">Sturnira erythromos</name>
    <name type="common">Hairy yellow-shouldered bat</name>
    <dbReference type="NCBI Taxonomy" id="192403"/>
    <lineage>
        <taxon>Eukaryota</taxon>
        <taxon>Metazoa</taxon>
        <taxon>Chordata</taxon>
        <taxon>Craniata</taxon>
        <taxon>Vertebrata</taxon>
        <taxon>Euteleostomi</taxon>
        <taxon>Mammalia</taxon>
        <taxon>Eutheria</taxon>
        <taxon>Laurasiatheria</taxon>
        <taxon>Chiroptera</taxon>
        <taxon>Yangochiroptera</taxon>
        <taxon>Phyllostomidae</taxon>
        <taxon>Stenodermatinae</taxon>
        <taxon>Sturnira</taxon>
    </lineage>
</organism>